<gene>
    <name evidence="7" type="primary">Aadat</name>
    <name type="synonym">Kat2</name>
</gene>
<evidence type="ECO:0000250" key="1"/>
<evidence type="ECO:0000250" key="2">
    <source>
        <dbReference type="UniProtKB" id="Q64602"/>
    </source>
</evidence>
<evidence type="ECO:0000250" key="3">
    <source>
        <dbReference type="UniProtKB" id="Q8N5Z0"/>
    </source>
</evidence>
<evidence type="ECO:0000255" key="4"/>
<evidence type="ECO:0000269" key="5">
    <source>
    </source>
</evidence>
<evidence type="ECO:0000305" key="6"/>
<evidence type="ECO:0000312" key="7">
    <source>
        <dbReference type="MGI" id="MGI:1345167"/>
    </source>
</evidence>
<evidence type="ECO:0007744" key="8">
    <source>
    </source>
</evidence>
<evidence type="ECO:0007744" key="9">
    <source>
    </source>
</evidence>
<evidence type="ECO:0007744" key="10">
    <source>
    </source>
</evidence>
<accession>Q9WVM8</accession>
<reference key="1">
    <citation type="journal article" date="1999" name="Mamm. Genome">
        <title>Genomic organization and expression analysis of mouse kynurenine aminotransferase II, a possible factor in the pathophysiology of Huntington's disease.</title>
        <authorList>
            <person name="Yu P."/>
            <person name="Mosbrook D.M."/>
            <person name="Tagle D.A."/>
        </authorList>
    </citation>
    <scope>NUCLEOTIDE SEQUENCE [MRNA]</scope>
    <scope>TISSUE SPECIFICITY</scope>
    <source>
        <strain>129/SvJ</strain>
    </source>
</reference>
<reference key="2">
    <citation type="journal article" date="2005" name="Science">
        <title>The transcriptional landscape of the mammalian genome.</title>
        <authorList>
            <person name="Carninci P."/>
            <person name="Kasukawa T."/>
            <person name="Katayama S."/>
            <person name="Gough J."/>
            <person name="Frith M.C."/>
            <person name="Maeda N."/>
            <person name="Oyama R."/>
            <person name="Ravasi T."/>
            <person name="Lenhard B."/>
            <person name="Wells C."/>
            <person name="Kodzius R."/>
            <person name="Shimokawa K."/>
            <person name="Bajic V.B."/>
            <person name="Brenner S.E."/>
            <person name="Batalov S."/>
            <person name="Forrest A.R."/>
            <person name="Zavolan M."/>
            <person name="Davis M.J."/>
            <person name="Wilming L.G."/>
            <person name="Aidinis V."/>
            <person name="Allen J.E."/>
            <person name="Ambesi-Impiombato A."/>
            <person name="Apweiler R."/>
            <person name="Aturaliya R.N."/>
            <person name="Bailey T.L."/>
            <person name="Bansal M."/>
            <person name="Baxter L."/>
            <person name="Beisel K.W."/>
            <person name="Bersano T."/>
            <person name="Bono H."/>
            <person name="Chalk A.M."/>
            <person name="Chiu K.P."/>
            <person name="Choudhary V."/>
            <person name="Christoffels A."/>
            <person name="Clutterbuck D.R."/>
            <person name="Crowe M.L."/>
            <person name="Dalla E."/>
            <person name="Dalrymple B.P."/>
            <person name="de Bono B."/>
            <person name="Della Gatta G."/>
            <person name="di Bernardo D."/>
            <person name="Down T."/>
            <person name="Engstrom P."/>
            <person name="Fagiolini M."/>
            <person name="Faulkner G."/>
            <person name="Fletcher C.F."/>
            <person name="Fukushima T."/>
            <person name="Furuno M."/>
            <person name="Futaki S."/>
            <person name="Gariboldi M."/>
            <person name="Georgii-Hemming P."/>
            <person name="Gingeras T.R."/>
            <person name="Gojobori T."/>
            <person name="Green R.E."/>
            <person name="Gustincich S."/>
            <person name="Harbers M."/>
            <person name="Hayashi Y."/>
            <person name="Hensch T.K."/>
            <person name="Hirokawa N."/>
            <person name="Hill D."/>
            <person name="Huminiecki L."/>
            <person name="Iacono M."/>
            <person name="Ikeo K."/>
            <person name="Iwama A."/>
            <person name="Ishikawa T."/>
            <person name="Jakt M."/>
            <person name="Kanapin A."/>
            <person name="Katoh M."/>
            <person name="Kawasawa Y."/>
            <person name="Kelso J."/>
            <person name="Kitamura H."/>
            <person name="Kitano H."/>
            <person name="Kollias G."/>
            <person name="Krishnan S.P."/>
            <person name="Kruger A."/>
            <person name="Kummerfeld S.K."/>
            <person name="Kurochkin I.V."/>
            <person name="Lareau L.F."/>
            <person name="Lazarevic D."/>
            <person name="Lipovich L."/>
            <person name="Liu J."/>
            <person name="Liuni S."/>
            <person name="McWilliam S."/>
            <person name="Madan Babu M."/>
            <person name="Madera M."/>
            <person name="Marchionni L."/>
            <person name="Matsuda H."/>
            <person name="Matsuzawa S."/>
            <person name="Miki H."/>
            <person name="Mignone F."/>
            <person name="Miyake S."/>
            <person name="Morris K."/>
            <person name="Mottagui-Tabar S."/>
            <person name="Mulder N."/>
            <person name="Nakano N."/>
            <person name="Nakauchi H."/>
            <person name="Ng P."/>
            <person name="Nilsson R."/>
            <person name="Nishiguchi S."/>
            <person name="Nishikawa S."/>
            <person name="Nori F."/>
            <person name="Ohara O."/>
            <person name="Okazaki Y."/>
            <person name="Orlando V."/>
            <person name="Pang K.C."/>
            <person name="Pavan W.J."/>
            <person name="Pavesi G."/>
            <person name="Pesole G."/>
            <person name="Petrovsky N."/>
            <person name="Piazza S."/>
            <person name="Reed J."/>
            <person name="Reid J.F."/>
            <person name="Ring B.Z."/>
            <person name="Ringwald M."/>
            <person name="Rost B."/>
            <person name="Ruan Y."/>
            <person name="Salzberg S.L."/>
            <person name="Sandelin A."/>
            <person name="Schneider C."/>
            <person name="Schoenbach C."/>
            <person name="Sekiguchi K."/>
            <person name="Semple C.A."/>
            <person name="Seno S."/>
            <person name="Sessa L."/>
            <person name="Sheng Y."/>
            <person name="Shibata Y."/>
            <person name="Shimada H."/>
            <person name="Shimada K."/>
            <person name="Silva D."/>
            <person name="Sinclair B."/>
            <person name="Sperling S."/>
            <person name="Stupka E."/>
            <person name="Sugiura K."/>
            <person name="Sultana R."/>
            <person name="Takenaka Y."/>
            <person name="Taki K."/>
            <person name="Tammoja K."/>
            <person name="Tan S.L."/>
            <person name="Tang S."/>
            <person name="Taylor M.S."/>
            <person name="Tegner J."/>
            <person name="Teichmann S.A."/>
            <person name="Ueda H.R."/>
            <person name="van Nimwegen E."/>
            <person name="Verardo R."/>
            <person name="Wei C.L."/>
            <person name="Yagi K."/>
            <person name="Yamanishi H."/>
            <person name="Zabarovsky E."/>
            <person name="Zhu S."/>
            <person name="Zimmer A."/>
            <person name="Hide W."/>
            <person name="Bult C."/>
            <person name="Grimmond S.M."/>
            <person name="Teasdale R.D."/>
            <person name="Liu E.T."/>
            <person name="Brusic V."/>
            <person name="Quackenbush J."/>
            <person name="Wahlestedt C."/>
            <person name="Mattick J.S."/>
            <person name="Hume D.A."/>
            <person name="Kai C."/>
            <person name="Sasaki D."/>
            <person name="Tomaru Y."/>
            <person name="Fukuda S."/>
            <person name="Kanamori-Katayama M."/>
            <person name="Suzuki M."/>
            <person name="Aoki J."/>
            <person name="Arakawa T."/>
            <person name="Iida J."/>
            <person name="Imamura K."/>
            <person name="Itoh M."/>
            <person name="Kato T."/>
            <person name="Kawaji H."/>
            <person name="Kawagashira N."/>
            <person name="Kawashima T."/>
            <person name="Kojima M."/>
            <person name="Kondo S."/>
            <person name="Konno H."/>
            <person name="Nakano K."/>
            <person name="Ninomiya N."/>
            <person name="Nishio T."/>
            <person name="Okada M."/>
            <person name="Plessy C."/>
            <person name="Shibata K."/>
            <person name="Shiraki T."/>
            <person name="Suzuki S."/>
            <person name="Tagami M."/>
            <person name="Waki K."/>
            <person name="Watahiki A."/>
            <person name="Okamura-Oho Y."/>
            <person name="Suzuki H."/>
            <person name="Kawai J."/>
            <person name="Hayashizaki Y."/>
        </authorList>
    </citation>
    <scope>NUCLEOTIDE SEQUENCE [LARGE SCALE MRNA]</scope>
    <source>
        <strain>C57BL/6J</strain>
        <tissue>Kidney</tissue>
    </source>
</reference>
<reference key="3">
    <citation type="journal article" date="2004" name="Genome Res.">
        <title>The status, quality, and expansion of the NIH full-length cDNA project: the Mammalian Gene Collection (MGC).</title>
        <authorList>
            <consortium name="The MGC Project Team"/>
        </authorList>
    </citation>
    <scope>NUCLEOTIDE SEQUENCE [LARGE SCALE MRNA]</scope>
    <source>
        <tissue>Liver</tissue>
    </source>
</reference>
<reference key="4">
    <citation type="journal article" date="2010" name="Cell">
        <title>A tissue-specific atlas of mouse protein phosphorylation and expression.</title>
        <authorList>
            <person name="Huttlin E.L."/>
            <person name="Jedrychowski M.P."/>
            <person name="Elias J.E."/>
            <person name="Goswami T."/>
            <person name="Rad R."/>
            <person name="Beausoleil S.A."/>
            <person name="Villen J."/>
            <person name="Haas W."/>
            <person name="Sowa M.E."/>
            <person name="Gygi S.P."/>
        </authorList>
    </citation>
    <scope>PHOSPHORYLATION [LARGE SCALE ANALYSIS] AT SER-40</scope>
    <scope>IDENTIFICATION BY MASS SPECTROMETRY [LARGE SCALE ANALYSIS]</scope>
    <source>
        <tissue>Kidney</tissue>
        <tissue>Liver</tissue>
    </source>
</reference>
<reference key="5">
    <citation type="journal article" date="2013" name="Mol. Cell">
        <title>SIRT5-mediated lysine desuccinylation impacts diverse metabolic pathways.</title>
        <authorList>
            <person name="Park J."/>
            <person name="Chen Y."/>
            <person name="Tishkoff D.X."/>
            <person name="Peng C."/>
            <person name="Tan M."/>
            <person name="Dai L."/>
            <person name="Xie Z."/>
            <person name="Zhang Y."/>
            <person name="Zwaans B.M."/>
            <person name="Skinner M.E."/>
            <person name="Lombard D.B."/>
            <person name="Zhao Y."/>
        </authorList>
    </citation>
    <scope>SUCCINYLATION [LARGE SCALE ANALYSIS] AT LYS-172; LYS-263; LYS-339 AND LYS-367</scope>
    <scope>IDENTIFICATION BY MASS SPECTROMETRY [LARGE SCALE ANALYSIS]</scope>
    <source>
        <tissue>Liver</tissue>
    </source>
</reference>
<reference key="6">
    <citation type="journal article" date="2013" name="Proc. Natl. Acad. Sci. U.S.A.">
        <title>Label-free quantitative proteomics of the lysine acetylome in mitochondria identifies substrates of SIRT3 in metabolic pathways.</title>
        <authorList>
            <person name="Rardin M.J."/>
            <person name="Newman J.C."/>
            <person name="Held J.M."/>
            <person name="Cusack M.P."/>
            <person name="Sorensen D.J."/>
            <person name="Li B."/>
            <person name="Schilling B."/>
            <person name="Mooney S.D."/>
            <person name="Kahn C.R."/>
            <person name="Verdin E."/>
            <person name="Gibson B.W."/>
        </authorList>
    </citation>
    <scope>ACETYLATION [LARGE SCALE ANALYSIS] AT LYS-69; LYS-179; LYS-263; LYS-339; LYS-351; LYS-367 AND LYS-422</scope>
    <scope>IDENTIFICATION BY MASS SPECTROMETRY [LARGE SCALE ANALYSIS]</scope>
    <source>
        <tissue>Liver</tissue>
    </source>
</reference>
<dbReference type="EC" id="2.6.1.39" evidence="3"/>
<dbReference type="EC" id="2.6.1.4" evidence="3"/>
<dbReference type="EC" id="2.6.1.63" evidence="3"/>
<dbReference type="EC" id="2.6.1.7" evidence="3"/>
<dbReference type="EC" id="2.6.1.73" evidence="3"/>
<dbReference type="EMBL" id="AF072376">
    <property type="protein sequence ID" value="AAD39680.1"/>
    <property type="molecule type" value="mRNA"/>
</dbReference>
<dbReference type="EMBL" id="AK075578">
    <property type="protein sequence ID" value="BAC35833.1"/>
    <property type="molecule type" value="mRNA"/>
</dbReference>
<dbReference type="EMBL" id="BC012637">
    <property type="protein sequence ID" value="AAH12637.1"/>
    <property type="molecule type" value="mRNA"/>
</dbReference>
<dbReference type="CCDS" id="CCDS22320.1"/>
<dbReference type="RefSeq" id="NP_035964.1">
    <property type="nucleotide sequence ID" value="NM_011834.2"/>
</dbReference>
<dbReference type="SMR" id="Q9WVM8"/>
<dbReference type="FunCoup" id="Q9WVM8">
    <property type="interactions" value="691"/>
</dbReference>
<dbReference type="STRING" id="10090.ENSMUSP00000078436"/>
<dbReference type="iPTMnet" id="Q9WVM8"/>
<dbReference type="PhosphoSitePlus" id="Q9WVM8"/>
<dbReference type="SwissPalm" id="Q9WVM8"/>
<dbReference type="jPOST" id="Q9WVM8"/>
<dbReference type="PaxDb" id="10090-ENSMUSP00000078436"/>
<dbReference type="ProteomicsDB" id="285893"/>
<dbReference type="Antibodypedia" id="17143">
    <property type="antibodies" value="326 antibodies from 34 providers"/>
</dbReference>
<dbReference type="DNASU" id="23923"/>
<dbReference type="Ensembl" id="ENSMUST00000079472.4">
    <property type="protein sequence ID" value="ENSMUSP00000078436.3"/>
    <property type="gene ID" value="ENSMUSG00000057228.7"/>
</dbReference>
<dbReference type="GeneID" id="23923"/>
<dbReference type="KEGG" id="mmu:23923"/>
<dbReference type="UCSC" id="uc009lte.1">
    <property type="organism name" value="mouse"/>
</dbReference>
<dbReference type="AGR" id="MGI:1345167"/>
<dbReference type="CTD" id="51166"/>
<dbReference type="MGI" id="MGI:1345167">
    <property type="gene designation" value="Aadat"/>
</dbReference>
<dbReference type="VEuPathDB" id="HostDB:ENSMUSG00000057228"/>
<dbReference type="eggNOG" id="KOG0634">
    <property type="taxonomic scope" value="Eukaryota"/>
</dbReference>
<dbReference type="GeneTree" id="ENSGT00390000004594"/>
<dbReference type="HOGENOM" id="CLU_017584_0_6_1"/>
<dbReference type="InParanoid" id="Q9WVM8"/>
<dbReference type="OMA" id="FMPGEPF"/>
<dbReference type="PhylomeDB" id="Q9WVM8"/>
<dbReference type="TreeFam" id="TF328598"/>
<dbReference type="BRENDA" id="2.6.1.39">
    <property type="organism ID" value="3474"/>
</dbReference>
<dbReference type="BRENDA" id="2.6.1.7">
    <property type="organism ID" value="3474"/>
</dbReference>
<dbReference type="Reactome" id="R-MMU-71064">
    <property type="pathway name" value="Lysine catabolism"/>
</dbReference>
<dbReference type="Reactome" id="R-MMU-71240">
    <property type="pathway name" value="Tryptophan catabolism"/>
</dbReference>
<dbReference type="UniPathway" id="UPA00868">
    <property type="reaction ID" value="UER00838"/>
</dbReference>
<dbReference type="BioGRID-ORCS" id="23923">
    <property type="hits" value="3 hits in 77 CRISPR screens"/>
</dbReference>
<dbReference type="ChiTaRS" id="Aadat">
    <property type="organism name" value="mouse"/>
</dbReference>
<dbReference type="PRO" id="PR:Q9WVM8"/>
<dbReference type="Proteomes" id="UP000000589">
    <property type="component" value="Chromosome 8"/>
</dbReference>
<dbReference type="RNAct" id="Q9WVM8">
    <property type="molecule type" value="protein"/>
</dbReference>
<dbReference type="Bgee" id="ENSMUSG00000057228">
    <property type="expression patterns" value="Expressed in right kidney and 69 other cell types or tissues"/>
</dbReference>
<dbReference type="ExpressionAtlas" id="Q9WVM8">
    <property type="expression patterns" value="baseline and differential"/>
</dbReference>
<dbReference type="GO" id="GO:0005739">
    <property type="term" value="C:mitochondrion"/>
    <property type="evidence" value="ECO:0007005"/>
    <property type="project" value="MGI"/>
</dbReference>
<dbReference type="GO" id="GO:0047536">
    <property type="term" value="F:2-aminoadipate transaminase activity"/>
    <property type="evidence" value="ECO:0000250"/>
    <property type="project" value="UniProtKB"/>
</dbReference>
<dbReference type="GO" id="GO:0047958">
    <property type="term" value="F:glycine:2-oxoglutarate aminotransferase activity"/>
    <property type="evidence" value="ECO:0000250"/>
    <property type="project" value="UniProtKB"/>
</dbReference>
<dbReference type="GO" id="GO:0047315">
    <property type="term" value="F:kynurenine-glyoxylate transaminase activity"/>
    <property type="evidence" value="ECO:0000250"/>
    <property type="project" value="UniProtKB"/>
</dbReference>
<dbReference type="GO" id="GO:0016212">
    <property type="term" value="F:kynurenine-oxoglutarate transaminase activity"/>
    <property type="evidence" value="ECO:0000250"/>
    <property type="project" value="UniProtKB"/>
</dbReference>
<dbReference type="GO" id="GO:0050094">
    <property type="term" value="F:methionine-glyoxylate transaminase activity"/>
    <property type="evidence" value="ECO:0000250"/>
    <property type="project" value="UniProtKB"/>
</dbReference>
<dbReference type="GO" id="GO:0042803">
    <property type="term" value="F:protein homodimerization activity"/>
    <property type="evidence" value="ECO:0007669"/>
    <property type="project" value="Ensembl"/>
</dbReference>
<dbReference type="GO" id="GO:0030170">
    <property type="term" value="F:pyridoxal phosphate binding"/>
    <property type="evidence" value="ECO:0007669"/>
    <property type="project" value="InterPro"/>
</dbReference>
<dbReference type="GO" id="GO:0006103">
    <property type="term" value="P:2-oxoglutarate metabolic process"/>
    <property type="evidence" value="ECO:0000250"/>
    <property type="project" value="UniProtKB"/>
</dbReference>
<dbReference type="GO" id="GO:0009058">
    <property type="term" value="P:biosynthetic process"/>
    <property type="evidence" value="ECO:0007669"/>
    <property type="project" value="InterPro"/>
</dbReference>
<dbReference type="GO" id="GO:0006536">
    <property type="term" value="P:glutamate metabolic process"/>
    <property type="evidence" value="ECO:0000250"/>
    <property type="project" value="UniProtKB"/>
</dbReference>
<dbReference type="GO" id="GO:0070189">
    <property type="term" value="P:kynurenine metabolic process"/>
    <property type="evidence" value="ECO:0000250"/>
    <property type="project" value="UniProtKB"/>
</dbReference>
<dbReference type="GO" id="GO:0033512">
    <property type="term" value="P:L-lysine catabolic process to acetyl-CoA via saccharopine"/>
    <property type="evidence" value="ECO:0007669"/>
    <property type="project" value="UniProtKB-UniPathway"/>
</dbReference>
<dbReference type="CDD" id="cd00609">
    <property type="entry name" value="AAT_like"/>
    <property type="match status" value="1"/>
</dbReference>
<dbReference type="FunFam" id="3.40.640.10:FF:000071">
    <property type="entry name" value="Kynurenine/alpha-aminoadipate aminotransferase, mitochondrial"/>
    <property type="match status" value="1"/>
</dbReference>
<dbReference type="FunFam" id="3.90.1150.10:FF:000166">
    <property type="entry name" value="Kynurenine/alpha-aminoadipate aminotransferase, mitochondrial"/>
    <property type="match status" value="1"/>
</dbReference>
<dbReference type="Gene3D" id="3.40.640.10">
    <property type="entry name" value="Type I PLP-dependent aspartate aminotransferase-like (Major domain)"/>
    <property type="match status" value="1"/>
</dbReference>
<dbReference type="InterPro" id="IPR004839">
    <property type="entry name" value="Aminotransferase_I/II_large"/>
</dbReference>
<dbReference type="InterPro" id="IPR050859">
    <property type="entry name" value="Class-I_PLP-dep_aminotransf"/>
</dbReference>
<dbReference type="InterPro" id="IPR015424">
    <property type="entry name" value="PyrdxlP-dep_Trfase"/>
</dbReference>
<dbReference type="InterPro" id="IPR015421">
    <property type="entry name" value="PyrdxlP-dep_Trfase_major"/>
</dbReference>
<dbReference type="PANTHER" id="PTHR42790">
    <property type="entry name" value="AMINOTRANSFERASE"/>
    <property type="match status" value="1"/>
</dbReference>
<dbReference type="PANTHER" id="PTHR42790:SF19">
    <property type="entry name" value="KYNURENINE_ALPHA-AMINOADIPATE AMINOTRANSFERASE, MITOCHONDRIAL"/>
    <property type="match status" value="1"/>
</dbReference>
<dbReference type="Pfam" id="PF00155">
    <property type="entry name" value="Aminotran_1_2"/>
    <property type="match status" value="1"/>
</dbReference>
<dbReference type="SUPFAM" id="SSF53383">
    <property type="entry name" value="PLP-dependent transferases"/>
    <property type="match status" value="1"/>
</dbReference>
<comment type="function">
    <text evidence="3">Transaminase with broad substrate specificity. Has transaminase activity towards aminoadipate, kynurenine, methionine and glutamate. Shows activity also towards tryptophan, aspartate and hydroxykynurenine. Accepts a variety of oxo-acids as amino-group acceptors, with a preference for 2-oxoglutarate, 2-oxocaproic acid, phenylpyruvate and alpha-oxo-gamma-methiol butyric acid. Can also use glyoxylate as amino-group acceptor (in vitro) (By similarity).</text>
</comment>
<comment type="catalytic activity">
    <reaction evidence="3">
        <text>L-kynurenine + 2-oxoglutarate = kynurenate + L-glutamate + H2O</text>
        <dbReference type="Rhea" id="RHEA:65560"/>
        <dbReference type="ChEBI" id="CHEBI:15377"/>
        <dbReference type="ChEBI" id="CHEBI:16810"/>
        <dbReference type="ChEBI" id="CHEBI:29985"/>
        <dbReference type="ChEBI" id="CHEBI:57959"/>
        <dbReference type="ChEBI" id="CHEBI:58454"/>
        <dbReference type="EC" id="2.6.1.7"/>
    </reaction>
    <physiologicalReaction direction="left-to-right" evidence="3">
        <dbReference type="Rhea" id="RHEA:65561"/>
    </physiologicalReaction>
</comment>
<comment type="catalytic activity">
    <reaction evidence="3">
        <text>L-2-aminoadipate + 2-oxoglutarate = 2-oxoadipate + L-glutamate</text>
        <dbReference type="Rhea" id="RHEA:12601"/>
        <dbReference type="ChEBI" id="CHEBI:16810"/>
        <dbReference type="ChEBI" id="CHEBI:29985"/>
        <dbReference type="ChEBI" id="CHEBI:57499"/>
        <dbReference type="ChEBI" id="CHEBI:58672"/>
        <dbReference type="EC" id="2.6.1.39"/>
    </reaction>
</comment>
<comment type="catalytic activity">
    <reaction evidence="3">
        <text>glycine + 2-oxoglutarate = glyoxylate + L-glutamate</text>
        <dbReference type="Rhea" id="RHEA:14089"/>
        <dbReference type="ChEBI" id="CHEBI:16810"/>
        <dbReference type="ChEBI" id="CHEBI:29985"/>
        <dbReference type="ChEBI" id="CHEBI:36655"/>
        <dbReference type="ChEBI" id="CHEBI:57305"/>
        <dbReference type="EC" id="2.6.1.4"/>
    </reaction>
</comment>
<comment type="catalytic activity">
    <reaction evidence="3">
        <text>L-kynurenine + glyoxylate = kynurenate + glycine + H2O</text>
        <dbReference type="Rhea" id="RHEA:65896"/>
        <dbReference type="ChEBI" id="CHEBI:15377"/>
        <dbReference type="ChEBI" id="CHEBI:36655"/>
        <dbReference type="ChEBI" id="CHEBI:57305"/>
        <dbReference type="ChEBI" id="CHEBI:57959"/>
        <dbReference type="ChEBI" id="CHEBI:58454"/>
        <dbReference type="EC" id="2.6.1.63"/>
    </reaction>
    <physiologicalReaction direction="left-to-right" evidence="3">
        <dbReference type="Rhea" id="RHEA:65897"/>
    </physiologicalReaction>
</comment>
<comment type="catalytic activity">
    <reaction evidence="3">
        <text>3-hydroxy-L-kynurenine + glyoxylate = xanthurenate + glycine + H2O</text>
        <dbReference type="Rhea" id="RHEA:65900"/>
        <dbReference type="ChEBI" id="CHEBI:15377"/>
        <dbReference type="ChEBI" id="CHEBI:36655"/>
        <dbReference type="ChEBI" id="CHEBI:57305"/>
        <dbReference type="ChEBI" id="CHEBI:58125"/>
        <dbReference type="ChEBI" id="CHEBI:71201"/>
        <dbReference type="EC" id="2.6.1.63"/>
    </reaction>
</comment>
<comment type="catalytic activity">
    <reaction evidence="3">
        <text>2-oxohexanoate + L-kynurenine = L-2-aminohexanoate + kynurenate + H2O</text>
        <dbReference type="Rhea" id="RHEA:66060"/>
        <dbReference type="ChEBI" id="CHEBI:15377"/>
        <dbReference type="ChEBI" id="CHEBI:35177"/>
        <dbReference type="ChEBI" id="CHEBI:57959"/>
        <dbReference type="ChEBI" id="CHEBI:58454"/>
        <dbReference type="ChEBI" id="CHEBI:58455"/>
    </reaction>
    <physiologicalReaction direction="left-to-right" evidence="3">
        <dbReference type="Rhea" id="RHEA:66061"/>
    </physiologicalReaction>
</comment>
<comment type="catalytic activity">
    <reaction evidence="3">
        <text>3-phenylpyruvate + L-kynurenine = kynurenate + L-phenylalanine + H2O</text>
        <dbReference type="Rhea" id="RHEA:66092"/>
        <dbReference type="ChEBI" id="CHEBI:15377"/>
        <dbReference type="ChEBI" id="CHEBI:18005"/>
        <dbReference type="ChEBI" id="CHEBI:57959"/>
        <dbReference type="ChEBI" id="CHEBI:58095"/>
        <dbReference type="ChEBI" id="CHEBI:58454"/>
    </reaction>
    <physiologicalReaction direction="left-to-right" evidence="3">
        <dbReference type="Rhea" id="RHEA:66093"/>
    </physiologicalReaction>
</comment>
<comment type="catalytic activity">
    <reaction evidence="3">
        <text>4-methylsulfanyl-2-oxobutanoate + L-kynurenine = kynurenate + L-methionine + H2O</text>
        <dbReference type="Rhea" id="RHEA:69096"/>
        <dbReference type="ChEBI" id="CHEBI:15377"/>
        <dbReference type="ChEBI" id="CHEBI:16723"/>
        <dbReference type="ChEBI" id="CHEBI:57844"/>
        <dbReference type="ChEBI" id="CHEBI:57959"/>
        <dbReference type="ChEBI" id="CHEBI:58454"/>
    </reaction>
    <physiologicalReaction direction="left-to-right" evidence="3">
        <dbReference type="Rhea" id="RHEA:69097"/>
    </physiologicalReaction>
</comment>
<comment type="catalytic activity">
    <reaction evidence="3">
        <text>2-oxo-3-sulfanylpropanoate + L-kynurenine = kynurenate + L-cysteine + H2O</text>
        <dbReference type="Rhea" id="RHEA:69104"/>
        <dbReference type="ChEBI" id="CHEBI:15377"/>
        <dbReference type="ChEBI" id="CHEBI:35235"/>
        <dbReference type="ChEBI" id="CHEBI:57678"/>
        <dbReference type="ChEBI" id="CHEBI:57959"/>
        <dbReference type="ChEBI" id="CHEBI:58454"/>
    </reaction>
    <physiologicalReaction direction="left-to-right" evidence="3">
        <dbReference type="Rhea" id="RHEA:69105"/>
    </physiologicalReaction>
</comment>
<comment type="catalytic activity">
    <reaction evidence="3">
        <text>indole-3-pyruvate + L-kynurenine = kynurenate + L-tryptophan + H2O</text>
        <dbReference type="Rhea" id="RHEA:66052"/>
        <dbReference type="ChEBI" id="CHEBI:15377"/>
        <dbReference type="ChEBI" id="CHEBI:17640"/>
        <dbReference type="ChEBI" id="CHEBI:57912"/>
        <dbReference type="ChEBI" id="CHEBI:57959"/>
        <dbReference type="ChEBI" id="CHEBI:58454"/>
    </reaction>
    <physiologicalReaction direction="left-to-right" evidence="3">
        <dbReference type="Rhea" id="RHEA:66053"/>
    </physiologicalReaction>
</comment>
<comment type="catalytic activity">
    <reaction evidence="3">
        <text>2-oxopentanoate + L-kynurenine = L-2-aminopentanoate + kynurenate + H2O</text>
        <dbReference type="Rhea" id="RHEA:66076"/>
        <dbReference type="ChEBI" id="CHEBI:15377"/>
        <dbReference type="ChEBI" id="CHEBI:28644"/>
        <dbReference type="ChEBI" id="CHEBI:57959"/>
        <dbReference type="ChEBI" id="CHEBI:58441"/>
        <dbReference type="ChEBI" id="CHEBI:58454"/>
    </reaction>
    <physiologicalReaction direction="left-to-right" evidence="3">
        <dbReference type="Rhea" id="RHEA:66077"/>
    </physiologicalReaction>
</comment>
<comment type="catalytic activity">
    <reaction evidence="3">
        <text>4-methyl-2-oxopentanoate + L-kynurenine = kynurenate + L-leucine + H2O</text>
        <dbReference type="Rhea" id="RHEA:66068"/>
        <dbReference type="ChEBI" id="CHEBI:15377"/>
        <dbReference type="ChEBI" id="CHEBI:17865"/>
        <dbReference type="ChEBI" id="CHEBI:57427"/>
        <dbReference type="ChEBI" id="CHEBI:57959"/>
        <dbReference type="ChEBI" id="CHEBI:58454"/>
    </reaction>
    <physiologicalReaction direction="left-to-right" evidence="3">
        <dbReference type="Rhea" id="RHEA:66069"/>
    </physiologicalReaction>
</comment>
<comment type="catalytic activity">
    <reaction evidence="3">
        <text>glyoxylate + L-methionine = 4-methylsulfanyl-2-oxobutanoate + glycine</text>
        <dbReference type="Rhea" id="RHEA:22884"/>
        <dbReference type="ChEBI" id="CHEBI:16723"/>
        <dbReference type="ChEBI" id="CHEBI:36655"/>
        <dbReference type="ChEBI" id="CHEBI:57305"/>
        <dbReference type="ChEBI" id="CHEBI:57844"/>
        <dbReference type="EC" id="2.6.1.73"/>
    </reaction>
</comment>
<comment type="catalytic activity">
    <reaction evidence="3">
        <text>L-2-aminoadipate + glyoxylate = 2-oxoadipate + glycine</text>
        <dbReference type="Rhea" id="RHEA:69112"/>
        <dbReference type="ChEBI" id="CHEBI:36655"/>
        <dbReference type="ChEBI" id="CHEBI:57305"/>
        <dbReference type="ChEBI" id="CHEBI:57499"/>
        <dbReference type="ChEBI" id="CHEBI:58672"/>
    </reaction>
    <physiologicalReaction direction="left-to-right" evidence="3">
        <dbReference type="Rhea" id="RHEA:69113"/>
    </physiologicalReaction>
</comment>
<comment type="catalytic activity">
    <reaction evidence="3">
        <text>L-tyrosine + glyoxylate = 3-(4-hydroxyphenyl)pyruvate + glycine</text>
        <dbReference type="Rhea" id="RHEA:69116"/>
        <dbReference type="ChEBI" id="CHEBI:36242"/>
        <dbReference type="ChEBI" id="CHEBI:36655"/>
        <dbReference type="ChEBI" id="CHEBI:57305"/>
        <dbReference type="ChEBI" id="CHEBI:58315"/>
    </reaction>
</comment>
<comment type="catalytic activity">
    <reaction evidence="3">
        <text>glyoxylate + L-phenylalanine = 3-phenylpyruvate + glycine</text>
        <dbReference type="Rhea" id="RHEA:69120"/>
        <dbReference type="ChEBI" id="CHEBI:18005"/>
        <dbReference type="ChEBI" id="CHEBI:36655"/>
        <dbReference type="ChEBI" id="CHEBI:57305"/>
        <dbReference type="ChEBI" id="CHEBI:58095"/>
    </reaction>
</comment>
<comment type="catalytic activity">
    <reaction evidence="3">
        <text>L-tryptophan + glyoxylate = indole-3-pyruvate + glycine</text>
        <dbReference type="Rhea" id="RHEA:69124"/>
        <dbReference type="ChEBI" id="CHEBI:17640"/>
        <dbReference type="ChEBI" id="CHEBI:36655"/>
        <dbReference type="ChEBI" id="CHEBI:57305"/>
        <dbReference type="ChEBI" id="CHEBI:57912"/>
    </reaction>
</comment>
<comment type="catalytic activity">
    <reaction evidence="3">
        <text>L-leucine + glyoxylate = 4-methyl-2-oxopentanoate + glycine</text>
        <dbReference type="Rhea" id="RHEA:69128"/>
        <dbReference type="ChEBI" id="CHEBI:17865"/>
        <dbReference type="ChEBI" id="CHEBI:36655"/>
        <dbReference type="ChEBI" id="CHEBI:57305"/>
        <dbReference type="ChEBI" id="CHEBI:57427"/>
    </reaction>
</comment>
<comment type="catalytic activity">
    <reaction evidence="2">
        <text>2-oxobutanoate + L-kynurenine = (2S)-2-aminobutanoate + kynurenate + H2O</text>
        <dbReference type="Rhea" id="RHEA:66044"/>
        <dbReference type="ChEBI" id="CHEBI:15377"/>
        <dbReference type="ChEBI" id="CHEBI:16763"/>
        <dbReference type="ChEBI" id="CHEBI:57959"/>
        <dbReference type="ChEBI" id="CHEBI:58454"/>
        <dbReference type="ChEBI" id="CHEBI:74359"/>
    </reaction>
    <physiologicalReaction direction="left-to-right" evidence="2">
        <dbReference type="Rhea" id="RHEA:66045"/>
    </physiologicalReaction>
</comment>
<comment type="catalytic activity">
    <reaction evidence="2">
        <text>2-oxoadipate + L-kynurenine = L-2-aminoadipate + kynurenate + H2O</text>
        <dbReference type="Rhea" id="RHEA:70047"/>
        <dbReference type="ChEBI" id="CHEBI:15377"/>
        <dbReference type="ChEBI" id="CHEBI:57499"/>
        <dbReference type="ChEBI" id="CHEBI:57959"/>
        <dbReference type="ChEBI" id="CHEBI:58454"/>
        <dbReference type="ChEBI" id="CHEBI:58672"/>
    </reaction>
    <physiologicalReaction direction="left-to-right" evidence="2">
        <dbReference type="Rhea" id="RHEA:70048"/>
    </physiologicalReaction>
</comment>
<comment type="cofactor">
    <cofactor>
        <name>pyridoxal 5'-phosphate</name>
        <dbReference type="ChEBI" id="CHEBI:597326"/>
    </cofactor>
</comment>
<comment type="pathway">
    <text>Amino-acid degradation; L-lysine degradation via saccharopine pathway; glutaryl-CoA from L-lysine: step 4/6.</text>
</comment>
<comment type="subunit">
    <text evidence="1">Homodimer.</text>
</comment>
<comment type="subcellular location">
    <subcellularLocation>
        <location evidence="6">Mitochondrion</location>
    </subcellularLocation>
</comment>
<comment type="tissue specificity">
    <text evidence="5">Expressed mainly in kidney and to a lesser amount in liver and brain.</text>
</comment>
<comment type="similarity">
    <text evidence="6">Belongs to the class-I pyridoxal-phosphate-dependent aminotransferase family.</text>
</comment>
<proteinExistence type="evidence at protein level"/>
<name>AADAT_MOUSE</name>
<keyword id="KW-0007">Acetylation</keyword>
<keyword id="KW-0032">Aminotransferase</keyword>
<keyword id="KW-0496">Mitochondrion</keyword>
<keyword id="KW-0597">Phosphoprotein</keyword>
<keyword id="KW-0663">Pyridoxal phosphate</keyword>
<keyword id="KW-1185">Reference proteome</keyword>
<keyword id="KW-0808">Transferase</keyword>
<keyword id="KW-0809">Transit peptide</keyword>
<organism>
    <name type="scientific">Mus musculus</name>
    <name type="common">Mouse</name>
    <dbReference type="NCBI Taxonomy" id="10090"/>
    <lineage>
        <taxon>Eukaryota</taxon>
        <taxon>Metazoa</taxon>
        <taxon>Chordata</taxon>
        <taxon>Craniata</taxon>
        <taxon>Vertebrata</taxon>
        <taxon>Euteleostomi</taxon>
        <taxon>Mammalia</taxon>
        <taxon>Eutheria</taxon>
        <taxon>Euarchontoglires</taxon>
        <taxon>Glires</taxon>
        <taxon>Rodentia</taxon>
        <taxon>Myomorpha</taxon>
        <taxon>Muroidea</taxon>
        <taxon>Muridae</taxon>
        <taxon>Murinae</taxon>
        <taxon>Mus</taxon>
        <taxon>Mus</taxon>
    </lineage>
</organism>
<sequence length="425" mass="47598">MNYSRFLTATSLARKPSPIRTTADILSKAPKTLISLAPGSPNPSMFPFKSAAFTVENGSTIRFEDDLIKRALQYSPSYGIPELLSWLKQFQVKLHNPPTVNYPPNQGQMDLCITSGCQDGLCKAFEMLINPGDTILVNEPLFPGTLYAMKPLGCNIINVPSDEHGIIPEGLKKILSQWKPEDSKDPTKKTPKFLYTVPNGNNPTGNSLTGDRKKEIYELARKYDFLIIEDDPYYFLQFSKPWEPTFLSMDVDGRVIRADTFSKTVSSGLRVGFMTGPKTLIQNIVLHTQVSSVHACTLSQLMILQLLHQWGEEGFLAHIDRTIDFYKNQRDSILAAADKWLRGLAEWHVPKAGMFLWIKVKGISDTKQLIEEKAIEREVLLVPGNGFFIDGSAPTSFFRASFSLATPAQMDTAFQRLAQLIKESL</sequence>
<protein>
    <recommendedName>
        <fullName evidence="6">Kynurenine/alpha-aminoadipate aminotransferase, mitochondrial</fullName>
        <shortName>KAT/AadAT</shortName>
    </recommendedName>
    <alternativeName>
        <fullName>2-aminoadipate aminotransferase</fullName>
    </alternativeName>
    <alternativeName>
        <fullName>2-aminoadipate transaminase</fullName>
        <ecNumber evidence="3">2.6.1.39</ecNumber>
    </alternativeName>
    <alternativeName>
        <fullName>Alpha-aminoadipate aminotransferase</fullName>
        <shortName>AadAT</shortName>
    </alternativeName>
    <alternativeName>
        <fullName evidence="3">Glycine transaminase AADAT</fullName>
        <ecNumber evidence="3">2.6.1.4</ecNumber>
    </alternativeName>
    <alternativeName>
        <fullName>Kynurenine aminotransferase II</fullName>
    </alternativeName>
    <alternativeName>
        <fullName evidence="3">Kynurenine--glyoxylate transaminase AADAT</fullName>
        <ecNumber evidence="3">2.6.1.63</ecNumber>
    </alternativeName>
    <alternativeName>
        <fullName>Kynurenine--oxoglutarate aminotransferase II</fullName>
    </alternativeName>
    <alternativeName>
        <fullName>Kynurenine--oxoglutarate transaminase 2</fullName>
        <ecNumber evidence="3">2.6.1.7</ecNumber>
    </alternativeName>
    <alternativeName>
        <fullName>Kynurenine--oxoglutarate transaminase II</fullName>
    </alternativeName>
    <alternativeName>
        <fullName evidence="3">Methionine--glyoxylate transaminase AADAT</fullName>
        <ecNumber evidence="3">2.6.1.73</ecNumber>
    </alternativeName>
</protein>
<feature type="transit peptide" description="Mitochondrion" evidence="4">
    <location>
        <begin position="1"/>
        <end position="29"/>
    </location>
</feature>
<feature type="chain" id="PRO_0000020603" description="Kynurenine/alpha-aminoadipate aminotransferase, mitochondrial">
    <location>
        <begin position="30"/>
        <end position="425"/>
    </location>
</feature>
<feature type="binding site" evidence="1">
    <location>
        <position position="20"/>
    </location>
    <ligand>
        <name>substrate</name>
    </ligand>
</feature>
<feature type="binding site" evidence="1">
    <location>
        <position position="74"/>
    </location>
    <ligand>
        <name>substrate</name>
    </ligand>
</feature>
<feature type="binding site" evidence="1">
    <location>
        <position position="202"/>
    </location>
    <ligand>
        <name>substrate</name>
    </ligand>
</feature>
<feature type="binding site" evidence="1">
    <location>
        <position position="399"/>
    </location>
    <ligand>
        <name>substrate</name>
    </ligand>
</feature>
<feature type="modified residue" description="Phosphoserine" evidence="8">
    <location>
        <position position="40"/>
    </location>
</feature>
<feature type="modified residue" description="N6-acetyllysine" evidence="9">
    <location>
        <position position="69"/>
    </location>
</feature>
<feature type="modified residue" description="N6-succinyllysine" evidence="10">
    <location>
        <position position="172"/>
    </location>
</feature>
<feature type="modified residue" description="N6-acetyllysine" evidence="9">
    <location>
        <position position="179"/>
    </location>
</feature>
<feature type="modified residue" description="N6-(pyridoxal phosphate)lysine; alternate" evidence="1">
    <location>
        <position position="263"/>
    </location>
</feature>
<feature type="modified residue" description="N6-acetyllysine; alternate" evidence="9">
    <location>
        <position position="263"/>
    </location>
</feature>
<feature type="modified residue" description="N6-succinyllysine; alternate" evidence="10">
    <location>
        <position position="263"/>
    </location>
</feature>
<feature type="modified residue" description="N6-acetyllysine; alternate" evidence="9">
    <location>
        <position position="339"/>
    </location>
</feature>
<feature type="modified residue" description="N6-succinyllysine; alternate" evidence="10">
    <location>
        <position position="339"/>
    </location>
</feature>
<feature type="modified residue" description="N6-acetyllysine" evidence="9">
    <location>
        <position position="351"/>
    </location>
</feature>
<feature type="modified residue" description="N6-acetyllysine; alternate" evidence="9">
    <location>
        <position position="367"/>
    </location>
</feature>
<feature type="modified residue" description="N6-succinyllysine; alternate" evidence="10">
    <location>
        <position position="367"/>
    </location>
</feature>
<feature type="modified residue" description="N6-acetyllysine" evidence="9">
    <location>
        <position position="422"/>
    </location>
</feature>